<dbReference type="EMBL" id="AE014075">
    <property type="protein sequence ID" value="AAN79363.1"/>
    <property type="molecule type" value="Genomic_DNA"/>
</dbReference>
<dbReference type="RefSeq" id="WP_000430015.1">
    <property type="nucleotide sequence ID" value="NZ_CP051263.1"/>
</dbReference>
<dbReference type="SMR" id="Q8CW90"/>
<dbReference type="STRING" id="199310.c0890"/>
<dbReference type="KEGG" id="ecc:c0890"/>
<dbReference type="eggNOG" id="COG4774">
    <property type="taxonomic scope" value="Bacteria"/>
</dbReference>
<dbReference type="HOGENOM" id="CLU_008287_9_1_6"/>
<dbReference type="BioCyc" id="ECOL199310:C0890-MONOMER"/>
<dbReference type="Proteomes" id="UP000001410">
    <property type="component" value="Chromosome"/>
</dbReference>
<dbReference type="GO" id="GO:0009279">
    <property type="term" value="C:cell outer membrane"/>
    <property type="evidence" value="ECO:0007669"/>
    <property type="project" value="UniProtKB-SubCell"/>
</dbReference>
<dbReference type="GO" id="GO:0015344">
    <property type="term" value="F:siderophore uptake transmembrane transporter activity"/>
    <property type="evidence" value="ECO:0007669"/>
    <property type="project" value="TreeGrafter"/>
</dbReference>
<dbReference type="GO" id="GO:0038023">
    <property type="term" value="F:signaling receptor activity"/>
    <property type="evidence" value="ECO:0007669"/>
    <property type="project" value="InterPro"/>
</dbReference>
<dbReference type="CDD" id="cd01347">
    <property type="entry name" value="ligand_gated_channel"/>
    <property type="match status" value="1"/>
</dbReference>
<dbReference type="FunFam" id="2.40.170.20:FF:000006">
    <property type="entry name" value="Catecholate siderophore receptor fiu"/>
    <property type="match status" value="1"/>
</dbReference>
<dbReference type="FunFam" id="2.170.130.10:FF:000001">
    <property type="entry name" value="Catecholate siderophore TonB-dependent receptor"/>
    <property type="match status" value="1"/>
</dbReference>
<dbReference type="Gene3D" id="2.40.170.20">
    <property type="entry name" value="TonB-dependent receptor, beta-barrel domain"/>
    <property type="match status" value="1"/>
</dbReference>
<dbReference type="Gene3D" id="2.170.130.10">
    <property type="entry name" value="TonB-dependent receptor, plug domain"/>
    <property type="match status" value="1"/>
</dbReference>
<dbReference type="InterPro" id="IPR012910">
    <property type="entry name" value="Plug_dom"/>
</dbReference>
<dbReference type="InterPro" id="IPR037066">
    <property type="entry name" value="Plug_dom_sf"/>
</dbReference>
<dbReference type="InterPro" id="IPR039426">
    <property type="entry name" value="TonB-dep_rcpt-like"/>
</dbReference>
<dbReference type="InterPro" id="IPR000531">
    <property type="entry name" value="TonB-dep_rcpt_b-brl"/>
</dbReference>
<dbReference type="InterPro" id="IPR010916">
    <property type="entry name" value="TonB_box_CS"/>
</dbReference>
<dbReference type="InterPro" id="IPR036942">
    <property type="entry name" value="TonB_rcpt_b-brl_sf"/>
</dbReference>
<dbReference type="InterPro" id="IPR010105">
    <property type="entry name" value="TonB_sidphr_rcpt"/>
</dbReference>
<dbReference type="NCBIfam" id="NF007349">
    <property type="entry name" value="PRK09840.1"/>
    <property type="match status" value="1"/>
</dbReference>
<dbReference type="NCBIfam" id="TIGR01783">
    <property type="entry name" value="TonB-siderophor"/>
    <property type="match status" value="1"/>
</dbReference>
<dbReference type="PANTHER" id="PTHR32552:SF89">
    <property type="entry name" value="CATECHOLATE SIDEROPHORE RECEPTOR FIU"/>
    <property type="match status" value="1"/>
</dbReference>
<dbReference type="PANTHER" id="PTHR32552">
    <property type="entry name" value="FERRICHROME IRON RECEPTOR-RELATED"/>
    <property type="match status" value="1"/>
</dbReference>
<dbReference type="Pfam" id="PF07715">
    <property type="entry name" value="Plug"/>
    <property type="match status" value="1"/>
</dbReference>
<dbReference type="Pfam" id="PF00593">
    <property type="entry name" value="TonB_dep_Rec_b-barrel"/>
    <property type="match status" value="1"/>
</dbReference>
<dbReference type="SUPFAM" id="SSF56935">
    <property type="entry name" value="Porins"/>
    <property type="match status" value="1"/>
</dbReference>
<dbReference type="PROSITE" id="PS00430">
    <property type="entry name" value="TONB_DEPENDENT_REC_1"/>
    <property type="match status" value="1"/>
</dbReference>
<dbReference type="PROSITE" id="PS52016">
    <property type="entry name" value="TONB_DEPENDENT_REC_3"/>
    <property type="match status" value="1"/>
</dbReference>
<evidence type="ECO:0000250" key="1"/>
<evidence type="ECO:0000255" key="2"/>
<evidence type="ECO:0000255" key="3">
    <source>
        <dbReference type="PROSITE-ProRule" id="PRU01360"/>
    </source>
</evidence>
<evidence type="ECO:0000305" key="4"/>
<proteinExistence type="inferred from homology"/>
<comment type="function">
    <text evidence="1">Involved in the active transport across the outer membrane of iron complexed with catecholate siderophores such as dihydroxybenzoylserine and dihydroxybenzoate. It derives its energy for transport by interacting with the trans-periplasmic membrane protein TonB. Can also transport catechol-substituted cephalosporins. Receptor for microcins M, H47 and E492 (By similarity).</text>
</comment>
<comment type="subcellular location">
    <subcellularLocation>
        <location evidence="3">Cell outer membrane</location>
        <topology evidence="3">Multi-pass membrane protein</topology>
    </subcellularLocation>
</comment>
<comment type="similarity">
    <text evidence="4">Belongs to the TonB-dependent receptor family.</text>
</comment>
<keyword id="KW-0998">Cell outer membrane</keyword>
<keyword id="KW-0406">Ion transport</keyword>
<keyword id="KW-0408">Iron</keyword>
<keyword id="KW-0410">Iron transport</keyword>
<keyword id="KW-0472">Membrane</keyword>
<keyword id="KW-0675">Receptor</keyword>
<keyword id="KW-1185">Reference proteome</keyword>
<keyword id="KW-0732">Signal</keyword>
<keyword id="KW-0798">TonB box</keyword>
<keyword id="KW-0812">Transmembrane</keyword>
<keyword id="KW-1134">Transmembrane beta strand</keyword>
<keyword id="KW-0813">Transport</keyword>
<organism>
    <name type="scientific">Escherichia coli O6:H1 (strain CFT073 / ATCC 700928 / UPEC)</name>
    <dbReference type="NCBI Taxonomy" id="199310"/>
    <lineage>
        <taxon>Bacteria</taxon>
        <taxon>Pseudomonadati</taxon>
        <taxon>Pseudomonadota</taxon>
        <taxon>Gammaproteobacteria</taxon>
        <taxon>Enterobacterales</taxon>
        <taxon>Enterobacteriaceae</taxon>
        <taxon>Escherichia</taxon>
    </lineage>
</organism>
<accession>Q8CW90</accession>
<feature type="signal peptide" evidence="2">
    <location>
        <begin position="1"/>
        <end position="31"/>
    </location>
</feature>
<feature type="chain" id="PRO_0000248082" description="Catecholate siderophore receptor Fiu">
    <location>
        <begin position="32"/>
        <end position="760"/>
    </location>
</feature>
<feature type="domain" description="TBDR plug" evidence="3">
    <location>
        <begin position="67"/>
        <end position="175"/>
    </location>
</feature>
<feature type="domain" description="TBDR beta-barrel" evidence="3">
    <location>
        <begin position="180"/>
        <end position="760"/>
    </location>
</feature>
<feature type="short sequence motif" description="TonB C-terminal box" evidence="1">
    <location>
        <begin position="743"/>
        <end position="760"/>
    </location>
</feature>
<gene>
    <name type="primary">fiu</name>
    <name type="ordered locus">c0890</name>
</gene>
<reference key="1">
    <citation type="journal article" date="2002" name="Proc. Natl. Acad. Sci. U.S.A.">
        <title>Extensive mosaic structure revealed by the complete genome sequence of uropathogenic Escherichia coli.</title>
        <authorList>
            <person name="Welch R.A."/>
            <person name="Burland V."/>
            <person name="Plunkett G. III"/>
            <person name="Redford P."/>
            <person name="Roesch P."/>
            <person name="Rasko D."/>
            <person name="Buckles E.L."/>
            <person name="Liou S.-R."/>
            <person name="Boutin A."/>
            <person name="Hackett J."/>
            <person name="Stroud D."/>
            <person name="Mayhew G.F."/>
            <person name="Rose D.J."/>
            <person name="Zhou S."/>
            <person name="Schwartz D.C."/>
            <person name="Perna N.T."/>
            <person name="Mobley H.L.T."/>
            <person name="Donnenberg M.S."/>
            <person name="Blattner F.R."/>
        </authorList>
    </citation>
    <scope>NUCLEOTIDE SEQUENCE [LARGE SCALE GENOMIC DNA]</scope>
    <source>
        <strain>CFT073 / ATCC 700928 / UPEC</strain>
    </source>
</reference>
<protein>
    <recommendedName>
        <fullName>Catecholate siderophore receptor Fiu</fullName>
    </recommendedName>
    <alternativeName>
        <fullName>Ferric iron uptake protein</fullName>
    </alternativeName>
    <alternativeName>
        <fullName>TonB-dependent receptor Fiu</fullName>
    </alternativeName>
</protein>
<sequence>MENNRNFPARQFHSLTFFAGLCIGITPVAQALAAEGQANADDTLVVEASTPSLYAPQQSADPKFSRPVADTTRTMTVISEQVIKDQGATNLTDALKNVPGVGAFFAGENGNSTTGDAIYMRGADTSNSIYIDGIRDIGSVSRDTFNTEQVEVIKGPSGTDYGRSAPTGSINMISKQPRNDSGIDASASIGSAWFRRGTLDVNQVIGDTTAVRLNVMGEKTHDAGRDKVKNERYGVAPSVVFGLGTANRLYLNYLHVTQHNTPDGGIPTIGLPGYSAPSAGTAALNHSGKVDTHNFYGTDSDYDDSTTDTATMRFEHDINDNTTIRNTTRWSRVKQDYLMTAIMGGASNITQPTSDVNSWTWSRTANTKDVSNKILTNQTNLTSTFYTGAIGHDLSTGVEFTRETQTNYGVNPVTLPAVNIYHPDSSIHPGGLTRNGANANGQTDTFAIYAFDTLQITRDFELNGGIRLDNYHTEYDSATACGGSGRGAITCPAGVAKGSPVTTVDTAKSGNLVNWKAGALYHLTENGNVYINYAVSQQPPGGNNFALAQSGSGNSANRTDFKPQKANTSEIGTKWQVLDKRLLLTAALFRTDIENEVEQNDDGTYSQYGKKRVEGYEISVAGNITPAWQMIGGYTQQKATIKNGKDVAQDGSSSLPYTPEHAFTLWSQYQATDDISVGAGARYIGSMHKGSDGAVGTPAFTEGYWVADAKLGYRVNRNLDFQLNVYNLFDTDYVASINKSGYRYHPGEPRTFLLTANMHF</sequence>
<name>FIU_ECOL6</name>